<evidence type="ECO:0000255" key="1">
    <source>
        <dbReference type="HAMAP-Rule" id="MF_00509"/>
    </source>
</evidence>
<evidence type="ECO:0000256" key="2">
    <source>
        <dbReference type="SAM" id="MobiDB-lite"/>
    </source>
</evidence>
<dbReference type="EMBL" id="CP001120">
    <property type="protein sequence ID" value="ACF67560.1"/>
    <property type="molecule type" value="Genomic_DNA"/>
</dbReference>
<dbReference type="RefSeq" id="WP_000983126.1">
    <property type="nucleotide sequence ID" value="NC_011083.1"/>
</dbReference>
<dbReference type="SMR" id="B4TCF7"/>
<dbReference type="KEGG" id="seh:SeHA_C2687"/>
<dbReference type="HOGENOM" id="CLU_030174_1_0_6"/>
<dbReference type="Proteomes" id="UP000001866">
    <property type="component" value="Chromosome"/>
</dbReference>
<dbReference type="GO" id="GO:0032153">
    <property type="term" value="C:cell division site"/>
    <property type="evidence" value="ECO:0007669"/>
    <property type="project" value="UniProtKB-UniRule"/>
</dbReference>
<dbReference type="GO" id="GO:0005886">
    <property type="term" value="C:plasma membrane"/>
    <property type="evidence" value="ECO:0007669"/>
    <property type="project" value="UniProtKB-SubCell"/>
</dbReference>
<dbReference type="GO" id="GO:0000917">
    <property type="term" value="P:division septum assembly"/>
    <property type="evidence" value="ECO:0007669"/>
    <property type="project" value="TreeGrafter"/>
</dbReference>
<dbReference type="GO" id="GO:0043093">
    <property type="term" value="P:FtsZ-dependent cytokinesis"/>
    <property type="evidence" value="ECO:0007669"/>
    <property type="project" value="UniProtKB-UniRule"/>
</dbReference>
<dbReference type="CDD" id="cd00231">
    <property type="entry name" value="ZipA"/>
    <property type="match status" value="1"/>
</dbReference>
<dbReference type="FunFam" id="3.30.1400.10:FF:000001">
    <property type="entry name" value="Cell division protein ZipA"/>
    <property type="match status" value="1"/>
</dbReference>
<dbReference type="Gene3D" id="3.30.1400.10">
    <property type="entry name" value="ZipA, C-terminal FtsZ-binding domain"/>
    <property type="match status" value="1"/>
</dbReference>
<dbReference type="HAMAP" id="MF_00509">
    <property type="entry name" value="ZipA"/>
    <property type="match status" value="1"/>
</dbReference>
<dbReference type="InterPro" id="IPR011919">
    <property type="entry name" value="Cell_div_ZipA"/>
</dbReference>
<dbReference type="InterPro" id="IPR007449">
    <property type="entry name" value="ZipA_FtsZ-bd_C"/>
</dbReference>
<dbReference type="InterPro" id="IPR036765">
    <property type="entry name" value="ZipA_FtsZ-bd_C_sf"/>
</dbReference>
<dbReference type="NCBIfam" id="TIGR02205">
    <property type="entry name" value="septum_zipA"/>
    <property type="match status" value="1"/>
</dbReference>
<dbReference type="PANTHER" id="PTHR38685">
    <property type="entry name" value="CELL DIVISION PROTEIN ZIPA"/>
    <property type="match status" value="1"/>
</dbReference>
<dbReference type="PANTHER" id="PTHR38685:SF1">
    <property type="entry name" value="CELL DIVISION PROTEIN ZIPA"/>
    <property type="match status" value="1"/>
</dbReference>
<dbReference type="Pfam" id="PF04354">
    <property type="entry name" value="ZipA_C"/>
    <property type="match status" value="1"/>
</dbReference>
<dbReference type="SMART" id="SM00771">
    <property type="entry name" value="ZipA_C"/>
    <property type="match status" value="1"/>
</dbReference>
<dbReference type="SUPFAM" id="SSF64383">
    <property type="entry name" value="Cell-division protein ZipA, C-terminal domain"/>
    <property type="match status" value="1"/>
</dbReference>
<accession>B4TCF7</accession>
<comment type="function">
    <text evidence="1">Essential cell division protein that stabilizes the FtsZ protofilaments by cross-linking them and that serves as a cytoplasmic membrane anchor for the Z ring. Also required for the recruitment to the septal ring of downstream cell division proteins.</text>
</comment>
<comment type="subunit">
    <text evidence="1">Interacts with FtsZ via their C-terminal domains.</text>
</comment>
<comment type="subcellular location">
    <subcellularLocation>
        <location evidence="1">Cell inner membrane</location>
        <topology evidence="1">Single-pass type I membrane protein</topology>
    </subcellularLocation>
    <text evidence="1">Localizes to the Z ring in an FtsZ-dependent manner.</text>
</comment>
<comment type="similarity">
    <text evidence="1">Belongs to the ZipA family.</text>
</comment>
<reference key="1">
    <citation type="journal article" date="2011" name="J. Bacteriol.">
        <title>Comparative genomics of 28 Salmonella enterica isolates: evidence for CRISPR-mediated adaptive sublineage evolution.</title>
        <authorList>
            <person name="Fricke W.F."/>
            <person name="Mammel M.K."/>
            <person name="McDermott P.F."/>
            <person name="Tartera C."/>
            <person name="White D.G."/>
            <person name="Leclerc J.E."/>
            <person name="Ravel J."/>
            <person name="Cebula T.A."/>
        </authorList>
    </citation>
    <scope>NUCLEOTIDE SEQUENCE [LARGE SCALE GENOMIC DNA]</scope>
    <source>
        <strain>SL476</strain>
    </source>
</reference>
<keyword id="KW-0131">Cell cycle</keyword>
<keyword id="KW-0132">Cell division</keyword>
<keyword id="KW-0997">Cell inner membrane</keyword>
<keyword id="KW-1003">Cell membrane</keyword>
<keyword id="KW-0472">Membrane</keyword>
<keyword id="KW-0812">Transmembrane</keyword>
<keyword id="KW-1133">Transmembrane helix</keyword>
<name>ZIPA_SALHS</name>
<sequence length="328" mass="36318">MMQDLRLILIIVGAIAIIALLVHGFWTSRKERSSMFRDRPLKRMKSKRDDDSYDDDVEEDEGVGEVRVHRVNHAPGQSQEHDAPRQSPQHQYQPPYASAQPRPAAPPQPQAPMQQPVQQPVQPAPQPQQVQPSAPPVQPPQQQPAPPSQAPQPVAQPAPPPSAQTFQPAEPVVEAEPVVEEAPVVEKPQRKEAVIIMNVAAHHGSELNGEVLLNSIQQSGFKFGDMNIFHRHLSPDGSGPALFSLANMVNPGTFDPEMTDFTTPGVTIFMQVPSYGDALQNFKLMLQSAQHIADEVGGVVLDDQRRMMTPQKLREYQDRIREVMDANA</sequence>
<gene>
    <name evidence="1" type="primary">zipA</name>
    <name type="ordered locus">SeHA_C2687</name>
</gene>
<proteinExistence type="inferred from homology"/>
<protein>
    <recommendedName>
        <fullName evidence="1">Cell division protein ZipA</fullName>
    </recommendedName>
</protein>
<organism>
    <name type="scientific">Salmonella heidelberg (strain SL476)</name>
    <dbReference type="NCBI Taxonomy" id="454169"/>
    <lineage>
        <taxon>Bacteria</taxon>
        <taxon>Pseudomonadati</taxon>
        <taxon>Pseudomonadota</taxon>
        <taxon>Gammaproteobacteria</taxon>
        <taxon>Enterobacterales</taxon>
        <taxon>Enterobacteriaceae</taxon>
        <taxon>Salmonella</taxon>
    </lineage>
</organism>
<feature type="chain" id="PRO_1000127228" description="Cell division protein ZipA">
    <location>
        <begin position="1"/>
        <end position="328"/>
    </location>
</feature>
<feature type="topological domain" description="Periplasmic" evidence="1">
    <location>
        <begin position="1"/>
        <end position="6"/>
    </location>
</feature>
<feature type="transmembrane region" description="Helical" evidence="1">
    <location>
        <begin position="7"/>
        <end position="27"/>
    </location>
</feature>
<feature type="topological domain" description="Cytoplasmic" evidence="1">
    <location>
        <begin position="28"/>
        <end position="328"/>
    </location>
</feature>
<feature type="region of interest" description="Disordered" evidence="2">
    <location>
        <begin position="42"/>
        <end position="178"/>
    </location>
</feature>
<feature type="compositionally biased region" description="Acidic residues" evidence="2">
    <location>
        <begin position="51"/>
        <end position="63"/>
    </location>
</feature>
<feature type="compositionally biased region" description="Low complexity" evidence="2">
    <location>
        <begin position="85"/>
        <end position="102"/>
    </location>
</feature>
<feature type="compositionally biased region" description="Low complexity" evidence="2">
    <location>
        <begin position="111"/>
        <end position="132"/>
    </location>
</feature>
<feature type="compositionally biased region" description="Pro residues" evidence="2">
    <location>
        <begin position="133"/>
        <end position="162"/>
    </location>
</feature>
<feature type="compositionally biased region" description="Low complexity" evidence="2">
    <location>
        <begin position="168"/>
        <end position="178"/>
    </location>
</feature>